<reference key="1">
    <citation type="journal article" date="2005" name="Nature">
        <title>Genomic sequence of the pathogenic and allergenic filamentous fungus Aspergillus fumigatus.</title>
        <authorList>
            <person name="Nierman W.C."/>
            <person name="Pain A."/>
            <person name="Anderson M.J."/>
            <person name="Wortman J.R."/>
            <person name="Kim H.S."/>
            <person name="Arroyo J."/>
            <person name="Berriman M."/>
            <person name="Abe K."/>
            <person name="Archer D.B."/>
            <person name="Bermejo C."/>
            <person name="Bennett J.W."/>
            <person name="Bowyer P."/>
            <person name="Chen D."/>
            <person name="Collins M."/>
            <person name="Coulsen R."/>
            <person name="Davies R."/>
            <person name="Dyer P.S."/>
            <person name="Farman M.L."/>
            <person name="Fedorova N."/>
            <person name="Fedorova N.D."/>
            <person name="Feldblyum T.V."/>
            <person name="Fischer R."/>
            <person name="Fosker N."/>
            <person name="Fraser A."/>
            <person name="Garcia J.L."/>
            <person name="Garcia M.J."/>
            <person name="Goble A."/>
            <person name="Goldman G.H."/>
            <person name="Gomi K."/>
            <person name="Griffith-Jones S."/>
            <person name="Gwilliam R."/>
            <person name="Haas B.J."/>
            <person name="Haas H."/>
            <person name="Harris D.E."/>
            <person name="Horiuchi H."/>
            <person name="Huang J."/>
            <person name="Humphray S."/>
            <person name="Jimenez J."/>
            <person name="Keller N."/>
            <person name="Khouri H."/>
            <person name="Kitamoto K."/>
            <person name="Kobayashi T."/>
            <person name="Konzack S."/>
            <person name="Kulkarni R."/>
            <person name="Kumagai T."/>
            <person name="Lafton A."/>
            <person name="Latge J.-P."/>
            <person name="Li W."/>
            <person name="Lord A."/>
            <person name="Lu C."/>
            <person name="Majoros W.H."/>
            <person name="May G.S."/>
            <person name="Miller B.L."/>
            <person name="Mohamoud Y."/>
            <person name="Molina M."/>
            <person name="Monod M."/>
            <person name="Mouyna I."/>
            <person name="Mulligan S."/>
            <person name="Murphy L.D."/>
            <person name="O'Neil S."/>
            <person name="Paulsen I."/>
            <person name="Penalva M.A."/>
            <person name="Pertea M."/>
            <person name="Price C."/>
            <person name="Pritchard B.L."/>
            <person name="Quail M.A."/>
            <person name="Rabbinowitsch E."/>
            <person name="Rawlins N."/>
            <person name="Rajandream M.A."/>
            <person name="Reichard U."/>
            <person name="Renauld H."/>
            <person name="Robson G.D."/>
            <person name="Rodriguez de Cordoba S."/>
            <person name="Rodriguez-Pena J.M."/>
            <person name="Ronning C.M."/>
            <person name="Rutter S."/>
            <person name="Salzberg S.L."/>
            <person name="Sanchez M."/>
            <person name="Sanchez-Ferrero J.C."/>
            <person name="Saunders D."/>
            <person name="Seeger K."/>
            <person name="Squares R."/>
            <person name="Squares S."/>
            <person name="Takeuchi M."/>
            <person name="Tekaia F."/>
            <person name="Turner G."/>
            <person name="Vazquez de Aldana C.R."/>
            <person name="Weidman J."/>
            <person name="White O."/>
            <person name="Woodward J.R."/>
            <person name="Yu J.-H."/>
            <person name="Fraser C.M."/>
            <person name="Galagan J.E."/>
            <person name="Asai K."/>
            <person name="Machida M."/>
            <person name="Hall N."/>
            <person name="Barrell B.G."/>
            <person name="Denning D.W."/>
        </authorList>
    </citation>
    <scope>NUCLEOTIDE SEQUENCE [LARGE SCALE GENOMIC DNA]</scope>
    <source>
        <strain>ATCC MYA-4609 / CBS 101355 / FGSC A1100 / Af293</strain>
    </source>
</reference>
<protein>
    <recommendedName>
        <fullName evidence="4">2-(3-amino-3-carboxypropyl)histidine synthase subunit 1</fullName>
        <ecNumber evidence="2">2.5.1.108</ecNumber>
    </recommendedName>
    <alternativeName>
        <fullName>Diphthamide biosynthesis protein 1</fullName>
    </alternativeName>
    <alternativeName>
        <fullName evidence="4">Diphtheria toxin resistance protein 1</fullName>
    </alternativeName>
    <alternativeName>
        <fullName evidence="4">S-adenosyl-L-methionine:L-histidine 3-amino-3-carboxypropyltransferase 1</fullName>
    </alternativeName>
</protein>
<dbReference type="EC" id="2.5.1.108" evidence="2"/>
<dbReference type="EMBL" id="AAHF01000001">
    <property type="protein sequence ID" value="EAL93538.1"/>
    <property type="molecule type" value="Genomic_DNA"/>
</dbReference>
<dbReference type="RefSeq" id="XP_755576.1">
    <property type="nucleotide sequence ID" value="XM_750483.1"/>
</dbReference>
<dbReference type="SMR" id="Q4X0S7"/>
<dbReference type="FunCoup" id="Q4X0S7">
    <property type="interactions" value="634"/>
</dbReference>
<dbReference type="STRING" id="330879.Q4X0S7"/>
<dbReference type="EnsemblFungi" id="EAL93538">
    <property type="protein sequence ID" value="EAL93538"/>
    <property type="gene ID" value="AFUA_2G12440"/>
</dbReference>
<dbReference type="GeneID" id="3513056"/>
<dbReference type="KEGG" id="afm:AFUA_2G12440"/>
<dbReference type="VEuPathDB" id="FungiDB:Afu2g12440"/>
<dbReference type="eggNOG" id="KOG2648">
    <property type="taxonomic scope" value="Eukaryota"/>
</dbReference>
<dbReference type="HOGENOM" id="CLU_037146_1_1_1"/>
<dbReference type="InParanoid" id="Q4X0S7"/>
<dbReference type="OMA" id="PGQVLGC"/>
<dbReference type="OrthoDB" id="1649088at2759"/>
<dbReference type="UniPathway" id="UPA00559"/>
<dbReference type="Proteomes" id="UP000002530">
    <property type="component" value="Chromosome 2"/>
</dbReference>
<dbReference type="GO" id="GO:0120513">
    <property type="term" value="C:2-(3-amino-3-carboxypropyl)histidine synthase complex"/>
    <property type="evidence" value="ECO:0000250"/>
    <property type="project" value="UniProtKB"/>
</dbReference>
<dbReference type="GO" id="GO:0005737">
    <property type="term" value="C:cytoplasm"/>
    <property type="evidence" value="ECO:0007669"/>
    <property type="project" value="UniProtKB-SubCell"/>
</dbReference>
<dbReference type="GO" id="GO:0090560">
    <property type="term" value="F:2-(3-amino-3-carboxypropyl)histidine synthase activity"/>
    <property type="evidence" value="ECO:0007669"/>
    <property type="project" value="UniProtKB-EC"/>
</dbReference>
<dbReference type="GO" id="GO:0051539">
    <property type="term" value="F:4 iron, 4 sulfur cluster binding"/>
    <property type="evidence" value="ECO:0000250"/>
    <property type="project" value="UniProtKB"/>
</dbReference>
<dbReference type="GO" id="GO:0046872">
    <property type="term" value="F:metal ion binding"/>
    <property type="evidence" value="ECO:0007669"/>
    <property type="project" value="UniProtKB-KW"/>
</dbReference>
<dbReference type="GO" id="GO:0017183">
    <property type="term" value="P:protein histidyl modification to diphthamide"/>
    <property type="evidence" value="ECO:0000250"/>
    <property type="project" value="UniProtKB"/>
</dbReference>
<dbReference type="FunFam" id="3.40.50.11840:FF:000001">
    <property type="entry name" value="2-(3-amino-3-carboxypropyl)histidine synthase subunit 1"/>
    <property type="match status" value="1"/>
</dbReference>
<dbReference type="FunFam" id="3.40.50.11850:FF:000001">
    <property type="entry name" value="2-(3-amino-3-carboxypropyl)histidine synthase subunit 1"/>
    <property type="match status" value="1"/>
</dbReference>
<dbReference type="FunFam" id="3.40.50.11860:FF:000002">
    <property type="entry name" value="2-(3-amino-3-carboxypropyl)histidine synthase subunit 1"/>
    <property type="match status" value="1"/>
</dbReference>
<dbReference type="Gene3D" id="3.40.50.11840">
    <property type="entry name" value="Diphthamide synthesis DPH1/DPH2 domain 1"/>
    <property type="match status" value="1"/>
</dbReference>
<dbReference type="Gene3D" id="3.40.50.11850">
    <property type="entry name" value="Diphthamide synthesis DPH1/DPH2 domain 2"/>
    <property type="match status" value="1"/>
</dbReference>
<dbReference type="Gene3D" id="3.40.50.11860">
    <property type="entry name" value="Diphthamide synthesis DPH1/DPH2 domain 3"/>
    <property type="match status" value="1"/>
</dbReference>
<dbReference type="InterPro" id="IPR016435">
    <property type="entry name" value="DPH1/DPH2"/>
</dbReference>
<dbReference type="InterPro" id="IPR042263">
    <property type="entry name" value="DPH1/DPH2_1"/>
</dbReference>
<dbReference type="InterPro" id="IPR042264">
    <property type="entry name" value="DPH1/DPH2_2"/>
</dbReference>
<dbReference type="InterPro" id="IPR042265">
    <property type="entry name" value="DPH1/DPH2_3"/>
</dbReference>
<dbReference type="InterPro" id="IPR035435">
    <property type="entry name" value="DPH1/DPH2_euk_archaea"/>
</dbReference>
<dbReference type="NCBIfam" id="TIGR00322">
    <property type="entry name" value="diphth2_R"/>
    <property type="match status" value="1"/>
</dbReference>
<dbReference type="PANTHER" id="PTHR10762:SF1">
    <property type="entry name" value="2-(3-AMINO-3-CARBOXYPROPYL)HISTIDINE SYNTHASE SUBUNIT 1"/>
    <property type="match status" value="1"/>
</dbReference>
<dbReference type="PANTHER" id="PTHR10762">
    <property type="entry name" value="DIPHTHAMIDE BIOSYNTHESIS PROTEIN"/>
    <property type="match status" value="1"/>
</dbReference>
<dbReference type="Pfam" id="PF01866">
    <property type="entry name" value="Diphthamide_syn"/>
    <property type="match status" value="1"/>
</dbReference>
<dbReference type="PIRSF" id="PIRSF004967">
    <property type="entry name" value="DPH1"/>
    <property type="match status" value="1"/>
</dbReference>
<dbReference type="SFLD" id="SFLDS00032">
    <property type="entry name" value="Radical_SAM_3-amino-3-carboxyp"/>
    <property type="match status" value="1"/>
</dbReference>
<feature type="chain" id="PRO_0000083368" description="2-(3-amino-3-carboxypropyl)histidine synthase subunit 1">
    <location>
        <begin position="1"/>
        <end position="445"/>
    </location>
</feature>
<feature type="region of interest" description="Disordered" evidence="3">
    <location>
        <begin position="1"/>
        <end position="74"/>
    </location>
</feature>
<feature type="compositionally biased region" description="Polar residues" evidence="3">
    <location>
        <begin position="45"/>
        <end position="58"/>
    </location>
</feature>
<feature type="binding site" evidence="1">
    <location>
        <position position="151"/>
    </location>
    <ligand>
        <name>[4Fe-4S] cluster</name>
        <dbReference type="ChEBI" id="CHEBI:49883"/>
    </ligand>
</feature>
<feature type="binding site" evidence="1">
    <location>
        <position position="254"/>
    </location>
    <ligand>
        <name>[4Fe-4S] cluster</name>
        <dbReference type="ChEBI" id="CHEBI:49883"/>
    </ligand>
</feature>
<feature type="binding site" evidence="1">
    <location>
        <position position="383"/>
    </location>
    <ligand>
        <name>[4Fe-4S] cluster</name>
        <dbReference type="ChEBI" id="CHEBI:49883"/>
    </ligand>
</feature>
<organism>
    <name type="scientific">Aspergillus fumigatus (strain ATCC MYA-4609 / CBS 101355 / FGSC A1100 / Af293)</name>
    <name type="common">Neosartorya fumigata</name>
    <dbReference type="NCBI Taxonomy" id="330879"/>
    <lineage>
        <taxon>Eukaryota</taxon>
        <taxon>Fungi</taxon>
        <taxon>Dikarya</taxon>
        <taxon>Ascomycota</taxon>
        <taxon>Pezizomycotina</taxon>
        <taxon>Eurotiomycetes</taxon>
        <taxon>Eurotiomycetidae</taxon>
        <taxon>Eurotiales</taxon>
        <taxon>Aspergillaceae</taxon>
        <taxon>Aspergillus</taxon>
        <taxon>Aspergillus subgen. Fumigati</taxon>
    </lineage>
</organism>
<gene>
    <name type="primary">dph1</name>
    <name type="ORF">AFUA_2G12440</name>
</gene>
<name>DPH1_ASPFU</name>
<comment type="function">
    <text evidence="2">Catalyzes the first step of diphthamide biosynthesis, a post-translational modification of histidine which occurs in elongation factor 2. DPH1 and DPH2 transfer a 3-amino-3-carboxypropyl (ACP) group from S-adenosyl-L-methionine (SAM) to a histidine residue, the reaction is assisted by a reduction system comprising DPH3 and a NADH-dependent reductase, predominantly CBR1.</text>
</comment>
<comment type="catalytic activity">
    <reaction evidence="2">
        <text>L-histidyl-[translation elongation factor 2] + S-adenosyl-L-methionine = 2-[(3S)-amino-3-carboxypropyl]-L-histidyl-[translation elongation factor 2] + S-methyl-5'-thioadenosine + H(+)</text>
        <dbReference type="Rhea" id="RHEA:36783"/>
        <dbReference type="Rhea" id="RHEA-COMP:9748"/>
        <dbReference type="Rhea" id="RHEA-COMP:9749"/>
        <dbReference type="ChEBI" id="CHEBI:15378"/>
        <dbReference type="ChEBI" id="CHEBI:17509"/>
        <dbReference type="ChEBI" id="CHEBI:29979"/>
        <dbReference type="ChEBI" id="CHEBI:59789"/>
        <dbReference type="ChEBI" id="CHEBI:73995"/>
        <dbReference type="EC" id="2.5.1.108"/>
    </reaction>
</comment>
<comment type="cofactor">
    <cofactor evidence="2">
        <name>[4Fe-4S] cluster</name>
        <dbReference type="ChEBI" id="CHEBI:49883"/>
    </cofactor>
    <text evidence="2">Binds 1 [4Fe-4S] cluster per subunit. The cluster is coordinated with 3 cysteines and an exchangeable S-adenosyl-L-methionine.</text>
</comment>
<comment type="pathway">
    <text>Protein modification; peptidyl-diphthamide biosynthesis.</text>
</comment>
<comment type="subunit">
    <text evidence="2">Component of the 2-(3-amino-3-carboxypropyl)histidine synthase complex composed of DPH1, DPH2, DPH3 and a NADH-dependent reductase, predominantly CBR1.</text>
</comment>
<comment type="subcellular location">
    <subcellularLocation>
        <location evidence="2">Cytoplasm</location>
    </subcellularLocation>
</comment>
<comment type="similarity">
    <text evidence="4">Belongs to the DPH1/DPH2 family. DPH1 subfamily.</text>
</comment>
<proteinExistence type="inferred from homology"/>
<accession>Q4X0S7</accession>
<evidence type="ECO:0000250" key="1">
    <source>
        <dbReference type="UniProtKB" id="O58832"/>
    </source>
</evidence>
<evidence type="ECO:0000250" key="2">
    <source>
        <dbReference type="UniProtKB" id="P40487"/>
    </source>
</evidence>
<evidence type="ECO:0000256" key="3">
    <source>
        <dbReference type="SAM" id="MobiDB-lite"/>
    </source>
</evidence>
<evidence type="ECO:0000305" key="4"/>
<keyword id="KW-0963">Cytoplasm</keyword>
<keyword id="KW-0408">Iron</keyword>
<keyword id="KW-0411">Iron-sulfur</keyword>
<keyword id="KW-0479">Metal-binding</keyword>
<keyword id="KW-1185">Reference proteome</keyword>
<keyword id="KW-0949">S-adenosyl-L-methionine</keyword>
<keyword id="KW-0808">Transferase</keyword>
<sequence>MTEPLLSSAAPEMKMEETSSSSNLRQPKKRFVGRRTADAHAQKDASISSKDVESTSVQRVAPRRNPRTLNQVPPEILDDPEIQAAIELLPKNYSFEIPKTIHRIRTSGAKRVALQFPEGLLIFATTISDILTQFCPGTETLIMGDVTYGACCIDDYTARALGCDLLVHYAHSCLIPVDVTQIKTLYIFVDISIDTSHLIATLERNFQPGKTIATVGTIQFNATLHGLKPVLERAGFKVVIPQIAPLSKGEILGCTSPQLSPTEIDILLYLGDGRFHLESAMIHNPTIPAYRYDPYSRTLSRETYSHDEMHALRRDAINTAKSAKKWGIILGSLGRQGNPNTMAMIENHLNERGIPFVNLLLSEIFPGKLASMSDVECWVQIACPRLSIDWGYAFPRPLLTPYEALIALGVREHWDSANSGVYPMDFYAKEGLGRTKPQQALQGAA</sequence>